<organism>
    <name type="scientific">Staphylococcus aureus (strain MRSA252)</name>
    <dbReference type="NCBI Taxonomy" id="282458"/>
    <lineage>
        <taxon>Bacteria</taxon>
        <taxon>Bacillati</taxon>
        <taxon>Bacillota</taxon>
        <taxon>Bacilli</taxon>
        <taxon>Bacillales</taxon>
        <taxon>Staphylococcaceae</taxon>
        <taxon>Staphylococcus</taxon>
    </lineage>
</organism>
<dbReference type="EMBL" id="BX571856">
    <property type="protein sequence ID" value="CAG39829.1"/>
    <property type="molecule type" value="Genomic_DNA"/>
</dbReference>
<dbReference type="SMR" id="Q6GIM6"/>
<dbReference type="KEGG" id="sar:SAR0820"/>
<dbReference type="HOGENOM" id="CLU_059558_0_0_9"/>
<dbReference type="Proteomes" id="UP000000596">
    <property type="component" value="Chromosome"/>
</dbReference>
<dbReference type="GO" id="GO:0005524">
    <property type="term" value="F:ATP binding"/>
    <property type="evidence" value="ECO:0007669"/>
    <property type="project" value="UniProtKB-UniRule"/>
</dbReference>
<dbReference type="GO" id="GO:0005525">
    <property type="term" value="F:GTP binding"/>
    <property type="evidence" value="ECO:0007669"/>
    <property type="project" value="UniProtKB-UniRule"/>
</dbReference>
<dbReference type="Gene3D" id="3.40.50.300">
    <property type="entry name" value="P-loop containing nucleotide triphosphate hydrolases"/>
    <property type="match status" value="1"/>
</dbReference>
<dbReference type="HAMAP" id="MF_00636">
    <property type="entry name" value="RapZ_like"/>
    <property type="match status" value="1"/>
</dbReference>
<dbReference type="InterPro" id="IPR027417">
    <property type="entry name" value="P-loop_NTPase"/>
</dbReference>
<dbReference type="InterPro" id="IPR005337">
    <property type="entry name" value="RapZ-like"/>
</dbReference>
<dbReference type="InterPro" id="IPR053930">
    <property type="entry name" value="RapZ-like_N"/>
</dbReference>
<dbReference type="InterPro" id="IPR053931">
    <property type="entry name" value="RapZ_C"/>
</dbReference>
<dbReference type="NCBIfam" id="NF003828">
    <property type="entry name" value="PRK05416.1"/>
    <property type="match status" value="1"/>
</dbReference>
<dbReference type="PANTHER" id="PTHR30448">
    <property type="entry name" value="RNASE ADAPTER PROTEIN RAPZ"/>
    <property type="match status" value="1"/>
</dbReference>
<dbReference type="PANTHER" id="PTHR30448:SF0">
    <property type="entry name" value="RNASE ADAPTER PROTEIN RAPZ"/>
    <property type="match status" value="1"/>
</dbReference>
<dbReference type="Pfam" id="PF22740">
    <property type="entry name" value="PapZ_C"/>
    <property type="match status" value="1"/>
</dbReference>
<dbReference type="Pfam" id="PF03668">
    <property type="entry name" value="RapZ-like_N"/>
    <property type="match status" value="1"/>
</dbReference>
<dbReference type="PIRSF" id="PIRSF005052">
    <property type="entry name" value="P-loopkin"/>
    <property type="match status" value="1"/>
</dbReference>
<dbReference type="SUPFAM" id="SSF52540">
    <property type="entry name" value="P-loop containing nucleoside triphosphate hydrolases"/>
    <property type="match status" value="1"/>
</dbReference>
<proteinExistence type="inferred from homology"/>
<name>Y820_STAAR</name>
<evidence type="ECO:0000255" key="1">
    <source>
        <dbReference type="HAMAP-Rule" id="MF_00636"/>
    </source>
</evidence>
<accession>Q6GIM6</accession>
<keyword id="KW-0067">ATP-binding</keyword>
<keyword id="KW-0342">GTP-binding</keyword>
<keyword id="KW-0547">Nucleotide-binding</keyword>
<sequence length="303" mass="34784">MDNNEKEKSKSELLVVTGLSGAGKSLVIQCLEDMGYFCVDNLPPVLLPKFVELMEQGNPSLRKVAIAIDLRGKELFNSLVAVVDKVKSESDVIIDVMFLEASTEKLISRYKETRRAHPLMEQGKKSLINAINDEREHLSQIRSIANFVIDTTKLSPKELKERIRRYYEDEEFETFTINVTSFGFKHGIQMDADLVFDVRFLPNPYYVVDLRPLTGLDKDVYNYVMKWKETEIFFEKLTDLLDFMIPGYKKEGKSQLVIAIGCTGGQHRSVALAERLGNYLNEVFEYNVYVHHRDAHIESGEKK</sequence>
<reference key="1">
    <citation type="journal article" date="2004" name="Proc. Natl. Acad. Sci. U.S.A.">
        <title>Complete genomes of two clinical Staphylococcus aureus strains: evidence for the rapid evolution of virulence and drug resistance.</title>
        <authorList>
            <person name="Holden M.T.G."/>
            <person name="Feil E.J."/>
            <person name="Lindsay J.A."/>
            <person name="Peacock S.J."/>
            <person name="Day N.P.J."/>
            <person name="Enright M.C."/>
            <person name="Foster T.J."/>
            <person name="Moore C.E."/>
            <person name="Hurst L."/>
            <person name="Atkin R."/>
            <person name="Barron A."/>
            <person name="Bason N."/>
            <person name="Bentley S.D."/>
            <person name="Chillingworth C."/>
            <person name="Chillingworth T."/>
            <person name="Churcher C."/>
            <person name="Clark L."/>
            <person name="Corton C."/>
            <person name="Cronin A."/>
            <person name="Doggett J."/>
            <person name="Dowd L."/>
            <person name="Feltwell T."/>
            <person name="Hance Z."/>
            <person name="Harris B."/>
            <person name="Hauser H."/>
            <person name="Holroyd S."/>
            <person name="Jagels K."/>
            <person name="James K.D."/>
            <person name="Lennard N."/>
            <person name="Line A."/>
            <person name="Mayes R."/>
            <person name="Moule S."/>
            <person name="Mungall K."/>
            <person name="Ormond D."/>
            <person name="Quail M.A."/>
            <person name="Rabbinowitsch E."/>
            <person name="Rutherford K.M."/>
            <person name="Sanders M."/>
            <person name="Sharp S."/>
            <person name="Simmonds M."/>
            <person name="Stevens K."/>
            <person name="Whitehead S."/>
            <person name="Barrell B.G."/>
            <person name="Spratt B.G."/>
            <person name="Parkhill J."/>
        </authorList>
    </citation>
    <scope>NUCLEOTIDE SEQUENCE [LARGE SCALE GENOMIC DNA]</scope>
    <source>
        <strain>MRSA252</strain>
    </source>
</reference>
<comment type="function">
    <text evidence="1">Displays ATPase and GTPase activities.</text>
</comment>
<comment type="similarity">
    <text evidence="1">Belongs to the RapZ-like family.</text>
</comment>
<gene>
    <name type="ordered locus">SAR0820</name>
</gene>
<protein>
    <recommendedName>
        <fullName evidence="1">Nucleotide-binding protein SAR0820</fullName>
    </recommendedName>
</protein>
<feature type="chain" id="PRO_0000107760" description="Nucleotide-binding protein SAR0820">
    <location>
        <begin position="1"/>
        <end position="303"/>
    </location>
</feature>
<feature type="binding site" evidence="1">
    <location>
        <begin position="18"/>
        <end position="25"/>
    </location>
    <ligand>
        <name>ATP</name>
        <dbReference type="ChEBI" id="CHEBI:30616"/>
    </ligand>
</feature>
<feature type="binding site" evidence="1">
    <location>
        <begin position="69"/>
        <end position="72"/>
    </location>
    <ligand>
        <name>GTP</name>
        <dbReference type="ChEBI" id="CHEBI:37565"/>
    </ligand>
</feature>